<dbReference type="EC" id="1.13.11.54" evidence="1"/>
<dbReference type="EC" id="1.13.11.53" evidence="1"/>
<dbReference type="EMBL" id="AE008922">
    <property type="protein sequence ID" value="AAM41108.1"/>
    <property type="molecule type" value="Genomic_DNA"/>
</dbReference>
<dbReference type="RefSeq" id="NP_637184.1">
    <property type="nucleotide sequence ID" value="NC_003902.1"/>
</dbReference>
<dbReference type="RefSeq" id="WP_011036989.1">
    <property type="nucleotide sequence ID" value="NC_003902.1"/>
</dbReference>
<dbReference type="SMR" id="Q8P9N4"/>
<dbReference type="STRING" id="190485.XCC1819"/>
<dbReference type="EnsemblBacteria" id="AAM41108">
    <property type="protein sequence ID" value="AAM41108"/>
    <property type="gene ID" value="XCC1819"/>
</dbReference>
<dbReference type="KEGG" id="xcc:XCC1819"/>
<dbReference type="PATRIC" id="fig|190485.4.peg.1940"/>
<dbReference type="eggNOG" id="COG1791">
    <property type="taxonomic scope" value="Bacteria"/>
</dbReference>
<dbReference type="HOGENOM" id="CLU_125400_0_0_6"/>
<dbReference type="OrthoDB" id="9795636at2"/>
<dbReference type="UniPathway" id="UPA00904">
    <property type="reaction ID" value="UER00878"/>
</dbReference>
<dbReference type="Proteomes" id="UP000001010">
    <property type="component" value="Chromosome"/>
</dbReference>
<dbReference type="GO" id="GO:0010308">
    <property type="term" value="F:acireductone dioxygenase (Ni2+-requiring) activity"/>
    <property type="evidence" value="ECO:0007669"/>
    <property type="project" value="UniProtKB-UniRule"/>
</dbReference>
<dbReference type="GO" id="GO:0010309">
    <property type="term" value="F:acireductone dioxygenase [iron(II)-requiring] activity"/>
    <property type="evidence" value="ECO:0000318"/>
    <property type="project" value="GO_Central"/>
</dbReference>
<dbReference type="GO" id="GO:0005506">
    <property type="term" value="F:iron ion binding"/>
    <property type="evidence" value="ECO:0007669"/>
    <property type="project" value="UniProtKB-UniRule"/>
</dbReference>
<dbReference type="GO" id="GO:0016151">
    <property type="term" value="F:nickel cation binding"/>
    <property type="evidence" value="ECO:0007669"/>
    <property type="project" value="UniProtKB-UniRule"/>
</dbReference>
<dbReference type="GO" id="GO:0019509">
    <property type="term" value="P:L-methionine salvage from methylthioadenosine"/>
    <property type="evidence" value="ECO:0007669"/>
    <property type="project" value="UniProtKB-UniRule"/>
</dbReference>
<dbReference type="GO" id="GO:0019284">
    <property type="term" value="P:L-methionine salvage from S-adenosylmethionine"/>
    <property type="evidence" value="ECO:0007669"/>
    <property type="project" value="InterPro"/>
</dbReference>
<dbReference type="GO" id="GO:0006555">
    <property type="term" value="P:methionine metabolic process"/>
    <property type="evidence" value="ECO:0000318"/>
    <property type="project" value="GO_Central"/>
</dbReference>
<dbReference type="CDD" id="cd02232">
    <property type="entry name" value="cupin_ARD"/>
    <property type="match status" value="1"/>
</dbReference>
<dbReference type="FunFam" id="2.60.120.10:FF:000056">
    <property type="entry name" value="Acireductone dioxygenase"/>
    <property type="match status" value="1"/>
</dbReference>
<dbReference type="Gene3D" id="2.60.120.10">
    <property type="entry name" value="Jelly Rolls"/>
    <property type="match status" value="1"/>
</dbReference>
<dbReference type="HAMAP" id="MF_01682">
    <property type="entry name" value="Salvage_MtnD"/>
    <property type="match status" value="1"/>
</dbReference>
<dbReference type="InterPro" id="IPR004313">
    <property type="entry name" value="ARD"/>
</dbReference>
<dbReference type="InterPro" id="IPR023956">
    <property type="entry name" value="ARD_bac"/>
</dbReference>
<dbReference type="InterPro" id="IPR014710">
    <property type="entry name" value="RmlC-like_jellyroll"/>
</dbReference>
<dbReference type="InterPro" id="IPR011051">
    <property type="entry name" value="RmlC_Cupin_sf"/>
</dbReference>
<dbReference type="PANTHER" id="PTHR23418">
    <property type="entry name" value="ACIREDUCTONE DIOXYGENASE"/>
    <property type="match status" value="1"/>
</dbReference>
<dbReference type="PANTHER" id="PTHR23418:SF0">
    <property type="entry name" value="ACIREDUCTONE DIOXYGENASE"/>
    <property type="match status" value="1"/>
</dbReference>
<dbReference type="Pfam" id="PF03079">
    <property type="entry name" value="ARD"/>
    <property type="match status" value="1"/>
</dbReference>
<dbReference type="SUPFAM" id="SSF51182">
    <property type="entry name" value="RmlC-like cupins"/>
    <property type="match status" value="1"/>
</dbReference>
<keyword id="KW-0028">Amino-acid biosynthesis</keyword>
<keyword id="KW-0223">Dioxygenase</keyword>
<keyword id="KW-0408">Iron</keyword>
<keyword id="KW-0479">Metal-binding</keyword>
<keyword id="KW-0486">Methionine biosynthesis</keyword>
<keyword id="KW-0533">Nickel</keyword>
<keyword id="KW-0560">Oxidoreductase</keyword>
<keyword id="KW-1185">Reference proteome</keyword>
<comment type="function">
    <text evidence="1">Catalyzes 2 different reactions between oxygen and the acireductone 1,2-dihydroxy-3-keto-5-methylthiopentene (DHK-MTPene) depending upon the metal bound in the active site. Fe-containing acireductone dioxygenase (Fe-ARD) produces formate and 2-keto-4-methylthiobutyrate (KMTB), the alpha-ketoacid precursor of methionine in the methionine recycle pathway. Ni-containing acireductone dioxygenase (Ni-ARD) produces methylthiopropionate, carbon monoxide and formate, and does not lie on the methionine recycle pathway.</text>
</comment>
<comment type="catalytic activity">
    <reaction evidence="1">
        <text>1,2-dihydroxy-5-(methylsulfanyl)pent-1-en-3-one + O2 = 3-(methylsulfanyl)propanoate + CO + formate + 2 H(+)</text>
        <dbReference type="Rhea" id="RHEA:14161"/>
        <dbReference type="ChEBI" id="CHEBI:15378"/>
        <dbReference type="ChEBI" id="CHEBI:15379"/>
        <dbReference type="ChEBI" id="CHEBI:15740"/>
        <dbReference type="ChEBI" id="CHEBI:17245"/>
        <dbReference type="ChEBI" id="CHEBI:49016"/>
        <dbReference type="ChEBI" id="CHEBI:49252"/>
        <dbReference type="EC" id="1.13.11.53"/>
    </reaction>
</comment>
<comment type="catalytic activity">
    <reaction evidence="1">
        <text>1,2-dihydroxy-5-(methylsulfanyl)pent-1-en-3-one + O2 = 4-methylsulfanyl-2-oxobutanoate + formate + 2 H(+)</text>
        <dbReference type="Rhea" id="RHEA:24504"/>
        <dbReference type="ChEBI" id="CHEBI:15378"/>
        <dbReference type="ChEBI" id="CHEBI:15379"/>
        <dbReference type="ChEBI" id="CHEBI:15740"/>
        <dbReference type="ChEBI" id="CHEBI:16723"/>
        <dbReference type="ChEBI" id="CHEBI:49252"/>
        <dbReference type="EC" id="1.13.11.54"/>
    </reaction>
</comment>
<comment type="cofactor">
    <cofactor evidence="1">
        <name>Fe(2+)</name>
        <dbReference type="ChEBI" id="CHEBI:29033"/>
    </cofactor>
    <text evidence="1">Binds 1 Fe(2+) cation per monomer.</text>
</comment>
<comment type="cofactor">
    <cofactor evidence="1">
        <name>Ni(2+)</name>
        <dbReference type="ChEBI" id="CHEBI:49786"/>
    </cofactor>
    <text evidence="1">Binds 1 nickel ion per monomer.</text>
</comment>
<comment type="pathway">
    <text evidence="1">Amino-acid biosynthesis; L-methionine biosynthesis via salvage pathway; L-methionine from S-methyl-5-thio-alpha-D-ribose 1-phosphate: step 5/6.</text>
</comment>
<comment type="subunit">
    <text evidence="1">Monomer.</text>
</comment>
<comment type="similarity">
    <text evidence="1">Belongs to the acireductone dioxygenase (ARD) family.</text>
</comment>
<reference key="1">
    <citation type="journal article" date="2002" name="Nature">
        <title>Comparison of the genomes of two Xanthomonas pathogens with differing host specificities.</title>
        <authorList>
            <person name="da Silva A.C.R."/>
            <person name="Ferro J.A."/>
            <person name="Reinach F.C."/>
            <person name="Farah C.S."/>
            <person name="Furlan L.R."/>
            <person name="Quaggio R.B."/>
            <person name="Monteiro-Vitorello C.B."/>
            <person name="Van Sluys M.A."/>
            <person name="Almeida N.F. Jr."/>
            <person name="Alves L.M.C."/>
            <person name="do Amaral A.M."/>
            <person name="Bertolini M.C."/>
            <person name="Camargo L.E.A."/>
            <person name="Camarotte G."/>
            <person name="Cannavan F."/>
            <person name="Cardozo J."/>
            <person name="Chambergo F."/>
            <person name="Ciapina L.P."/>
            <person name="Cicarelli R.M.B."/>
            <person name="Coutinho L.L."/>
            <person name="Cursino-Santos J.R."/>
            <person name="El-Dorry H."/>
            <person name="Faria J.B."/>
            <person name="Ferreira A.J.S."/>
            <person name="Ferreira R.C.C."/>
            <person name="Ferro M.I.T."/>
            <person name="Formighieri E.F."/>
            <person name="Franco M.C."/>
            <person name="Greggio C.C."/>
            <person name="Gruber A."/>
            <person name="Katsuyama A.M."/>
            <person name="Kishi L.T."/>
            <person name="Leite R.P."/>
            <person name="Lemos E.G.M."/>
            <person name="Lemos M.V.F."/>
            <person name="Locali E.C."/>
            <person name="Machado M.A."/>
            <person name="Madeira A.M.B.N."/>
            <person name="Martinez-Rossi N.M."/>
            <person name="Martins E.C."/>
            <person name="Meidanis J."/>
            <person name="Menck C.F.M."/>
            <person name="Miyaki C.Y."/>
            <person name="Moon D.H."/>
            <person name="Moreira L.M."/>
            <person name="Novo M.T.M."/>
            <person name="Okura V.K."/>
            <person name="Oliveira M.C."/>
            <person name="Oliveira V.R."/>
            <person name="Pereira H.A."/>
            <person name="Rossi A."/>
            <person name="Sena J.A.D."/>
            <person name="Silva C."/>
            <person name="de Souza R.F."/>
            <person name="Spinola L.A.F."/>
            <person name="Takita M.A."/>
            <person name="Tamura R.E."/>
            <person name="Teixeira E.C."/>
            <person name="Tezza R.I.D."/>
            <person name="Trindade dos Santos M."/>
            <person name="Truffi D."/>
            <person name="Tsai S.M."/>
            <person name="White F.F."/>
            <person name="Setubal J.C."/>
            <person name="Kitajima J.P."/>
        </authorList>
    </citation>
    <scope>NUCLEOTIDE SEQUENCE [LARGE SCALE GENOMIC DNA]</scope>
    <source>
        <strain>ATCC 33913 / DSM 3586 / NCPPB 528 / LMG 568 / P 25</strain>
    </source>
</reference>
<sequence>MSRLRIFADSNPTTPHFDSRDGEQIATELRKIGVTFERWHASQPVEPGASPEQVMAAYRADIDRISAERGFKTVDVVSIAPDNPKREEMRAKFLDEHFHKEDEVRFFVAGSGLFTLHVDAQVYEIECVKDDLIAVPDSTLHWFDMGPEPHFVAIRFFTEPDGWVGHFTGTEIAKQFPRYAPEKPPKAS</sequence>
<evidence type="ECO:0000255" key="1">
    <source>
        <dbReference type="HAMAP-Rule" id="MF_01682"/>
    </source>
</evidence>
<evidence type="ECO:0000256" key="2">
    <source>
        <dbReference type="SAM" id="MobiDB-lite"/>
    </source>
</evidence>
<gene>
    <name evidence="1" type="primary">mtnD</name>
    <name type="ordered locus">XCC1819</name>
</gene>
<proteinExistence type="inferred from homology"/>
<name>MTND_XANCP</name>
<accession>Q8P9N4</accession>
<feature type="chain" id="PRO_0000359247" description="Acireductone dioxygenase">
    <location>
        <begin position="1"/>
        <end position="188"/>
    </location>
</feature>
<feature type="region of interest" description="Disordered" evidence="2">
    <location>
        <begin position="1"/>
        <end position="20"/>
    </location>
</feature>
<feature type="binding site" evidence="1">
    <location>
        <position position="97"/>
    </location>
    <ligand>
        <name>Fe(2+)</name>
        <dbReference type="ChEBI" id="CHEBI:29033"/>
    </ligand>
</feature>
<feature type="binding site" evidence="1">
    <location>
        <position position="97"/>
    </location>
    <ligand>
        <name>Ni(2+)</name>
        <dbReference type="ChEBI" id="CHEBI:49786"/>
    </ligand>
</feature>
<feature type="binding site" evidence="1">
    <location>
        <position position="99"/>
    </location>
    <ligand>
        <name>Fe(2+)</name>
        <dbReference type="ChEBI" id="CHEBI:29033"/>
    </ligand>
</feature>
<feature type="binding site" evidence="1">
    <location>
        <position position="99"/>
    </location>
    <ligand>
        <name>Ni(2+)</name>
        <dbReference type="ChEBI" id="CHEBI:49786"/>
    </ligand>
</feature>
<feature type="binding site" evidence="1">
    <location>
        <position position="103"/>
    </location>
    <ligand>
        <name>Fe(2+)</name>
        <dbReference type="ChEBI" id="CHEBI:29033"/>
    </ligand>
</feature>
<feature type="binding site" evidence="1">
    <location>
        <position position="103"/>
    </location>
    <ligand>
        <name>Ni(2+)</name>
        <dbReference type="ChEBI" id="CHEBI:49786"/>
    </ligand>
</feature>
<feature type="binding site" evidence="1">
    <location>
        <position position="141"/>
    </location>
    <ligand>
        <name>Fe(2+)</name>
        <dbReference type="ChEBI" id="CHEBI:29033"/>
    </ligand>
</feature>
<feature type="binding site" evidence="1">
    <location>
        <position position="141"/>
    </location>
    <ligand>
        <name>Ni(2+)</name>
        <dbReference type="ChEBI" id="CHEBI:49786"/>
    </ligand>
</feature>
<feature type="site" description="May play a role in metal incorporation in vivo" evidence="1">
    <location>
        <position position="96"/>
    </location>
</feature>
<feature type="site" description="May play a role in transmitting local conformational changes" evidence="1">
    <location>
        <position position="102"/>
    </location>
</feature>
<feature type="site" description="Important to generate the dianion" evidence="1">
    <location>
        <position position="105"/>
    </location>
</feature>
<protein>
    <recommendedName>
        <fullName evidence="1">Acireductone dioxygenase</fullName>
    </recommendedName>
    <alternativeName>
        <fullName evidence="1">1,2-dihydroxy-3-keto-5-methylthiopentene dioxygenase</fullName>
        <shortName evidence="1">DHK-MTPene dioxygenase</shortName>
    </alternativeName>
    <alternativeName>
        <fullName evidence="1">Acireductone dioxygenase (Fe(2+)-requiring)</fullName>
        <shortName evidence="1">ARD'</shortName>
        <shortName evidence="1">Fe-ARD</shortName>
        <ecNumber evidence="1">1.13.11.54</ecNumber>
    </alternativeName>
    <alternativeName>
        <fullName evidence="1">Acireductone dioxygenase (Ni(2+)-requiring)</fullName>
        <shortName evidence="1">ARD</shortName>
        <shortName evidence="1">Ni-ARD</shortName>
        <ecNumber evidence="1">1.13.11.53</ecNumber>
    </alternativeName>
</protein>
<organism>
    <name type="scientific">Xanthomonas campestris pv. campestris (strain ATCC 33913 / DSM 3586 / NCPPB 528 / LMG 568 / P 25)</name>
    <dbReference type="NCBI Taxonomy" id="190485"/>
    <lineage>
        <taxon>Bacteria</taxon>
        <taxon>Pseudomonadati</taxon>
        <taxon>Pseudomonadota</taxon>
        <taxon>Gammaproteobacteria</taxon>
        <taxon>Lysobacterales</taxon>
        <taxon>Lysobacteraceae</taxon>
        <taxon>Xanthomonas</taxon>
    </lineage>
</organism>